<evidence type="ECO:0000255" key="1">
    <source>
        <dbReference type="HAMAP-Rule" id="MF_01315"/>
    </source>
</evidence>
<evidence type="ECO:0000256" key="2">
    <source>
        <dbReference type="SAM" id="MobiDB-lite"/>
    </source>
</evidence>
<evidence type="ECO:0000305" key="3"/>
<feature type="chain" id="PRO_0000306604" description="Small ribosomal subunit protein uS13">
    <location>
        <begin position="1"/>
        <end position="118"/>
    </location>
</feature>
<feature type="region of interest" description="Disordered" evidence="2">
    <location>
        <begin position="91"/>
        <end position="118"/>
    </location>
</feature>
<accession>Q2A5E8</accession>
<dbReference type="EMBL" id="AM233362">
    <property type="protein sequence ID" value="CAJ78699.1"/>
    <property type="molecule type" value="Genomic_DNA"/>
</dbReference>
<dbReference type="RefSeq" id="WP_003014373.1">
    <property type="nucleotide sequence ID" value="NZ_CP009694.1"/>
</dbReference>
<dbReference type="SMR" id="Q2A5E8"/>
<dbReference type="GeneID" id="75264239"/>
<dbReference type="KEGG" id="ftl:FTL_0258"/>
<dbReference type="Proteomes" id="UP000001944">
    <property type="component" value="Chromosome"/>
</dbReference>
<dbReference type="GO" id="GO:0005829">
    <property type="term" value="C:cytosol"/>
    <property type="evidence" value="ECO:0007669"/>
    <property type="project" value="TreeGrafter"/>
</dbReference>
<dbReference type="GO" id="GO:0015935">
    <property type="term" value="C:small ribosomal subunit"/>
    <property type="evidence" value="ECO:0007669"/>
    <property type="project" value="TreeGrafter"/>
</dbReference>
<dbReference type="GO" id="GO:0019843">
    <property type="term" value="F:rRNA binding"/>
    <property type="evidence" value="ECO:0007669"/>
    <property type="project" value="UniProtKB-UniRule"/>
</dbReference>
<dbReference type="GO" id="GO:0003735">
    <property type="term" value="F:structural constituent of ribosome"/>
    <property type="evidence" value="ECO:0007669"/>
    <property type="project" value="InterPro"/>
</dbReference>
<dbReference type="GO" id="GO:0000049">
    <property type="term" value="F:tRNA binding"/>
    <property type="evidence" value="ECO:0007669"/>
    <property type="project" value="UniProtKB-UniRule"/>
</dbReference>
<dbReference type="GO" id="GO:0006412">
    <property type="term" value="P:translation"/>
    <property type="evidence" value="ECO:0007669"/>
    <property type="project" value="UniProtKB-UniRule"/>
</dbReference>
<dbReference type="FunFam" id="1.10.8.50:FF:000001">
    <property type="entry name" value="30S ribosomal protein S13"/>
    <property type="match status" value="1"/>
</dbReference>
<dbReference type="FunFam" id="4.10.910.10:FF:000001">
    <property type="entry name" value="30S ribosomal protein S13"/>
    <property type="match status" value="1"/>
</dbReference>
<dbReference type="Gene3D" id="1.10.8.50">
    <property type="match status" value="1"/>
</dbReference>
<dbReference type="Gene3D" id="4.10.910.10">
    <property type="entry name" value="30s ribosomal protein s13, domain 2"/>
    <property type="match status" value="1"/>
</dbReference>
<dbReference type="HAMAP" id="MF_01315">
    <property type="entry name" value="Ribosomal_uS13"/>
    <property type="match status" value="1"/>
</dbReference>
<dbReference type="InterPro" id="IPR027437">
    <property type="entry name" value="Rbsml_uS13_C"/>
</dbReference>
<dbReference type="InterPro" id="IPR001892">
    <property type="entry name" value="Ribosomal_uS13"/>
</dbReference>
<dbReference type="InterPro" id="IPR010979">
    <property type="entry name" value="Ribosomal_uS13-like_H2TH"/>
</dbReference>
<dbReference type="InterPro" id="IPR019980">
    <property type="entry name" value="Ribosomal_uS13_bac-type"/>
</dbReference>
<dbReference type="InterPro" id="IPR018269">
    <property type="entry name" value="Ribosomal_uS13_CS"/>
</dbReference>
<dbReference type="NCBIfam" id="TIGR03631">
    <property type="entry name" value="uS13_bact"/>
    <property type="match status" value="1"/>
</dbReference>
<dbReference type="PANTHER" id="PTHR10871">
    <property type="entry name" value="30S RIBOSOMAL PROTEIN S13/40S RIBOSOMAL PROTEIN S18"/>
    <property type="match status" value="1"/>
</dbReference>
<dbReference type="PANTHER" id="PTHR10871:SF1">
    <property type="entry name" value="SMALL RIBOSOMAL SUBUNIT PROTEIN US13M"/>
    <property type="match status" value="1"/>
</dbReference>
<dbReference type="Pfam" id="PF00416">
    <property type="entry name" value="Ribosomal_S13"/>
    <property type="match status" value="1"/>
</dbReference>
<dbReference type="PIRSF" id="PIRSF002134">
    <property type="entry name" value="Ribosomal_S13"/>
    <property type="match status" value="1"/>
</dbReference>
<dbReference type="SUPFAM" id="SSF46946">
    <property type="entry name" value="S13-like H2TH domain"/>
    <property type="match status" value="1"/>
</dbReference>
<dbReference type="PROSITE" id="PS00646">
    <property type="entry name" value="RIBOSOMAL_S13_1"/>
    <property type="match status" value="1"/>
</dbReference>
<dbReference type="PROSITE" id="PS50159">
    <property type="entry name" value="RIBOSOMAL_S13_2"/>
    <property type="match status" value="1"/>
</dbReference>
<organism>
    <name type="scientific">Francisella tularensis subsp. holarctica (strain LVS)</name>
    <dbReference type="NCBI Taxonomy" id="376619"/>
    <lineage>
        <taxon>Bacteria</taxon>
        <taxon>Pseudomonadati</taxon>
        <taxon>Pseudomonadota</taxon>
        <taxon>Gammaproteobacteria</taxon>
        <taxon>Thiotrichales</taxon>
        <taxon>Francisellaceae</taxon>
        <taxon>Francisella</taxon>
    </lineage>
</organism>
<name>RS13_FRATH</name>
<gene>
    <name evidence="1" type="primary">rpsM</name>
    <name type="ordered locus">FTL_0258</name>
</gene>
<keyword id="KW-1185">Reference proteome</keyword>
<keyword id="KW-0687">Ribonucleoprotein</keyword>
<keyword id="KW-0689">Ribosomal protein</keyword>
<keyword id="KW-0694">RNA-binding</keyword>
<keyword id="KW-0699">rRNA-binding</keyword>
<keyword id="KW-0820">tRNA-binding</keyword>
<proteinExistence type="inferred from homology"/>
<protein>
    <recommendedName>
        <fullName evidence="1">Small ribosomal subunit protein uS13</fullName>
    </recommendedName>
    <alternativeName>
        <fullName evidence="3">30S ribosomal protein S13</fullName>
    </alternativeName>
</protein>
<comment type="function">
    <text evidence="1">Located at the top of the head of the 30S subunit, it contacts several helices of the 16S rRNA. In the 70S ribosome it contacts the 23S rRNA (bridge B1a) and protein L5 of the 50S subunit (bridge B1b), connecting the 2 subunits; these bridges are implicated in subunit movement. Contacts the tRNAs in the A and P-sites.</text>
</comment>
<comment type="subunit">
    <text evidence="1">Part of the 30S ribosomal subunit. Forms a loose heterodimer with protein S19. Forms two bridges to the 50S subunit in the 70S ribosome.</text>
</comment>
<comment type="similarity">
    <text evidence="1">Belongs to the universal ribosomal protein uS13 family.</text>
</comment>
<reference key="1">
    <citation type="submission" date="2006-03" db="EMBL/GenBank/DDBJ databases">
        <title>Complete genome sequence of Francisella tularensis LVS (Live Vaccine Strain).</title>
        <authorList>
            <person name="Chain P."/>
            <person name="Larimer F."/>
            <person name="Land M."/>
            <person name="Stilwagen S."/>
            <person name="Larsson P."/>
            <person name="Bearden S."/>
            <person name="Chu M."/>
            <person name="Oyston P."/>
            <person name="Forsman M."/>
            <person name="Andersson S."/>
            <person name="Lindler L."/>
            <person name="Titball R."/>
            <person name="Garcia E."/>
        </authorList>
    </citation>
    <scope>NUCLEOTIDE SEQUENCE [LARGE SCALE GENOMIC DNA]</scope>
    <source>
        <strain>LVS</strain>
    </source>
</reference>
<sequence>MARIAGVNIPVHKHTVIGLTSIYGIGKTRAQQICQTCNVDPTVKIKDLSEEQVESLRTEVAKFTVEGDLRREVSMDIKRLMDLGCFRGRRHRRSLPVRGQRTKTNARTRKGPRKPIKA</sequence>